<protein>
    <recommendedName>
        <fullName>Actin, cytoplasmic 1</fullName>
        <ecNumber evidence="5">3.6.4.-</ecNumber>
    </recommendedName>
    <alternativeName>
        <fullName>Beta-actin-1</fullName>
    </alternativeName>
    <component>
        <recommendedName>
            <fullName>Actin, cytoplasmic 1, N-terminally processed</fullName>
        </recommendedName>
    </component>
</protein>
<keyword id="KW-0007">Acetylation</keyword>
<keyword id="KW-0067">ATP-binding</keyword>
<keyword id="KW-0963">Cytoplasm</keyword>
<keyword id="KW-0206">Cytoskeleton</keyword>
<keyword id="KW-0378">Hydrolase</keyword>
<keyword id="KW-0488">Methylation</keyword>
<keyword id="KW-0547">Nucleotide-binding</keyword>
<keyword id="KW-0539">Nucleus</keyword>
<keyword id="KW-0558">Oxidation</keyword>
<keyword id="KW-1185">Reference proteome</keyword>
<proteinExistence type="evidence at protein level"/>
<dbReference type="EC" id="3.6.4.-" evidence="5"/>
<dbReference type="EMBL" id="AF057040">
    <property type="protein sequence ID" value="AAC13314.1"/>
    <property type="molecule type" value="mRNA"/>
</dbReference>
<dbReference type="EMBL" id="BC045846">
    <property type="protein sequence ID" value="AAH45846.1"/>
    <property type="molecule type" value="mRNA"/>
</dbReference>
<dbReference type="EMBL" id="BC063950">
    <property type="protein sequence ID" value="AAH63950.1"/>
    <property type="molecule type" value="mRNA"/>
</dbReference>
<dbReference type="RefSeq" id="NP_571106.1">
    <property type="nucleotide sequence ID" value="NM_131031.1"/>
</dbReference>
<dbReference type="SMR" id="Q7ZVI7"/>
<dbReference type="FunCoup" id="Q7ZVI7">
    <property type="interactions" value="3081"/>
</dbReference>
<dbReference type="IntAct" id="Q7ZVI7">
    <property type="interactions" value="1"/>
</dbReference>
<dbReference type="MINT" id="Q7ZVI7"/>
<dbReference type="STRING" id="7955.ENSDARP00000054986"/>
<dbReference type="PaxDb" id="7955-ENSDARP00000054986"/>
<dbReference type="Ensembl" id="ENSDART00000054987">
    <property type="protein sequence ID" value="ENSDARP00000054986"/>
    <property type="gene ID" value="ENSDARG00000037746"/>
</dbReference>
<dbReference type="Ensembl" id="ENSDART00000182072">
    <property type="protein sequence ID" value="ENSDARP00000154160"/>
    <property type="gene ID" value="ENSDARG00000113649"/>
</dbReference>
<dbReference type="GeneID" id="57934"/>
<dbReference type="KEGG" id="dre:57934"/>
<dbReference type="AGR" id="ZFIN:ZDB-GENE-000329-1"/>
<dbReference type="CTD" id="57934"/>
<dbReference type="ZFIN" id="ZDB-GENE-000329-1">
    <property type="gene designation" value="actb1"/>
</dbReference>
<dbReference type="eggNOG" id="KOG0676">
    <property type="taxonomic scope" value="Eukaryota"/>
</dbReference>
<dbReference type="InParanoid" id="Q7ZVI7"/>
<dbReference type="OMA" id="PNIMVGM"/>
<dbReference type="OrthoDB" id="6953074at2759"/>
<dbReference type="PhylomeDB" id="Q7ZVI7"/>
<dbReference type="TreeFam" id="TF354237"/>
<dbReference type="Reactome" id="R-DRE-2029482">
    <property type="pathway name" value="Regulation of actin dynamics for phagocytic cup formation"/>
</dbReference>
<dbReference type="Reactome" id="R-DRE-3928662">
    <property type="pathway name" value="EPHB-mediated forward signaling"/>
</dbReference>
<dbReference type="Reactome" id="R-DRE-418990">
    <property type="pathway name" value="Adherens junctions interactions"/>
</dbReference>
<dbReference type="Reactome" id="R-DRE-4420097">
    <property type="pathway name" value="VEGFA-VEGFR2 Pathway"/>
</dbReference>
<dbReference type="Reactome" id="R-DRE-5626467">
    <property type="pathway name" value="RHO GTPases activate IQGAPs"/>
</dbReference>
<dbReference type="Reactome" id="R-DRE-5663213">
    <property type="pathway name" value="RHO GTPases Activate WASPs and WAVEs"/>
</dbReference>
<dbReference type="Reactome" id="R-DRE-5663220">
    <property type="pathway name" value="RHO GTPases Activate Formins"/>
</dbReference>
<dbReference type="Reactome" id="R-DRE-9035034">
    <property type="pathway name" value="RHOF GTPase cycle"/>
</dbReference>
<dbReference type="PRO" id="PR:Q7ZVI7"/>
<dbReference type="Proteomes" id="UP000000437">
    <property type="component" value="Alternate scaffold 1"/>
</dbReference>
<dbReference type="Proteomes" id="UP000000437">
    <property type="component" value="Chromosome 1"/>
</dbReference>
<dbReference type="Bgee" id="ENSDARG00000037746">
    <property type="expression patterns" value="Expressed in granulocyte and 27 other cell types or tissues"/>
</dbReference>
<dbReference type="ExpressionAtlas" id="Q7ZVI7">
    <property type="expression patterns" value="baseline"/>
</dbReference>
<dbReference type="GO" id="GO:0015629">
    <property type="term" value="C:actin cytoskeleton"/>
    <property type="evidence" value="ECO:0000250"/>
    <property type="project" value="UniProtKB"/>
</dbReference>
<dbReference type="GO" id="GO:0005884">
    <property type="term" value="C:actin filament"/>
    <property type="evidence" value="ECO:0000318"/>
    <property type="project" value="GO_Central"/>
</dbReference>
<dbReference type="GO" id="GO:0005856">
    <property type="term" value="C:cytoskeleton"/>
    <property type="evidence" value="ECO:0000250"/>
    <property type="project" value="AgBase"/>
</dbReference>
<dbReference type="GO" id="GO:0097433">
    <property type="term" value="C:dense body"/>
    <property type="evidence" value="ECO:0000250"/>
    <property type="project" value="AgBase"/>
</dbReference>
<dbReference type="GO" id="GO:0005925">
    <property type="term" value="C:focal adhesion"/>
    <property type="evidence" value="ECO:0000250"/>
    <property type="project" value="AgBase"/>
</dbReference>
<dbReference type="GO" id="GO:0005634">
    <property type="term" value="C:nucleus"/>
    <property type="evidence" value="ECO:0000250"/>
    <property type="project" value="UniProtKB"/>
</dbReference>
<dbReference type="GO" id="GO:0005886">
    <property type="term" value="C:plasma membrane"/>
    <property type="evidence" value="ECO:0000250"/>
    <property type="project" value="AgBase"/>
</dbReference>
<dbReference type="GO" id="GO:0005524">
    <property type="term" value="F:ATP binding"/>
    <property type="evidence" value="ECO:0007669"/>
    <property type="project" value="UniProtKB-KW"/>
</dbReference>
<dbReference type="GO" id="GO:0016787">
    <property type="term" value="F:hydrolase activity"/>
    <property type="evidence" value="ECO:0007669"/>
    <property type="project" value="UniProtKB-KW"/>
</dbReference>
<dbReference type="GO" id="GO:0098973">
    <property type="term" value="F:structural constituent of postsynaptic actin cytoskeleton"/>
    <property type="evidence" value="ECO:0000318"/>
    <property type="project" value="GO_Central"/>
</dbReference>
<dbReference type="CDD" id="cd10224">
    <property type="entry name" value="ASKHA_NBD_actin"/>
    <property type="match status" value="1"/>
</dbReference>
<dbReference type="FunFam" id="2.30.36.70:FF:000001">
    <property type="entry name" value="Actin, alpha skeletal muscle"/>
    <property type="match status" value="1"/>
</dbReference>
<dbReference type="FunFam" id="3.30.420.40:FF:000131">
    <property type="entry name" value="Actin, alpha skeletal muscle"/>
    <property type="match status" value="1"/>
</dbReference>
<dbReference type="FunFam" id="3.30.420.40:FF:000291">
    <property type="entry name" value="Actin, alpha skeletal muscle"/>
    <property type="match status" value="1"/>
</dbReference>
<dbReference type="FunFam" id="3.90.640.10:FF:000047">
    <property type="entry name" value="Actin, alpha skeletal muscle"/>
    <property type="match status" value="1"/>
</dbReference>
<dbReference type="FunFam" id="3.30.420.40:FF:000058">
    <property type="entry name" value="Putative actin-related protein 5"/>
    <property type="match status" value="1"/>
</dbReference>
<dbReference type="Gene3D" id="3.30.420.40">
    <property type="match status" value="2"/>
</dbReference>
<dbReference type="Gene3D" id="3.90.640.10">
    <property type="entry name" value="Actin, Chain A, domain 4"/>
    <property type="match status" value="1"/>
</dbReference>
<dbReference type="InterPro" id="IPR004000">
    <property type="entry name" value="Actin"/>
</dbReference>
<dbReference type="InterPro" id="IPR020902">
    <property type="entry name" value="Actin/actin-like_CS"/>
</dbReference>
<dbReference type="InterPro" id="IPR004001">
    <property type="entry name" value="Actin_CS"/>
</dbReference>
<dbReference type="InterPro" id="IPR043129">
    <property type="entry name" value="ATPase_NBD"/>
</dbReference>
<dbReference type="PANTHER" id="PTHR11937">
    <property type="entry name" value="ACTIN"/>
    <property type="match status" value="1"/>
</dbReference>
<dbReference type="Pfam" id="PF00022">
    <property type="entry name" value="Actin"/>
    <property type="match status" value="1"/>
</dbReference>
<dbReference type="PRINTS" id="PR00190">
    <property type="entry name" value="ACTIN"/>
</dbReference>
<dbReference type="SMART" id="SM00268">
    <property type="entry name" value="ACTIN"/>
    <property type="match status" value="1"/>
</dbReference>
<dbReference type="SUPFAM" id="SSF53067">
    <property type="entry name" value="Actin-like ATPase domain"/>
    <property type="match status" value="2"/>
</dbReference>
<dbReference type="PROSITE" id="PS00406">
    <property type="entry name" value="ACTINS_1"/>
    <property type="match status" value="1"/>
</dbReference>
<dbReference type="PROSITE" id="PS00432">
    <property type="entry name" value="ACTINS_2"/>
    <property type="match status" value="1"/>
</dbReference>
<dbReference type="PROSITE" id="PS01132">
    <property type="entry name" value="ACTINS_ACT_LIKE"/>
    <property type="match status" value="1"/>
</dbReference>
<sequence length="375" mass="41767">MDEEIAALVVDNGSGMCKAGFAGDDAPRAVFPSIVGRPRHQGVMVGMGQKDSYVGDEAQSKRGILTLKYPIEHGIVTNWDDMEKIWHHTFYNELRVAPEEHPVLLTEAPLNPKANREKMTQIMFETFNTPAMYVAIQAVLSLYASGRTTGIVMDSGDGVTHTVPIYEGYALPHAILRLDLAGRDLTDYLMKILTERGYSFTTTAEREIVRDIKEKLCYVALDFEQEMGTAASSSSLEKSYELPDGQVITIGNERFRCPEALFQPSFLGMESCGIHETTFNSIMKCDVDIRKDLYANTVLSGGTTMYPGIADRMQKEITSLAPSTMKIKIIAPPERKYSVWIGGSILASLSTFQQMWISKQEYDESGPSIVHRKCF</sequence>
<comment type="function">
    <text evidence="3">Actin is a highly conserved protein that polymerizes to produce filaments that form cross-linked networks in the cytoplasm of cells. Actin exists in both monomeric (G-actin) and polymeric (F-actin) forms, both forms playing key functions, such as cell motility and contraction. In addition to their role in the cytoplasmic cytoskeleton, G- and F-actin also localize in the nucleus, and regulate gene transcription and motility and repair of damaged DNA.</text>
</comment>
<comment type="catalytic activity">
    <reaction evidence="5">
        <text>ATP + H2O = ADP + phosphate + H(+)</text>
        <dbReference type="Rhea" id="RHEA:13065"/>
        <dbReference type="ChEBI" id="CHEBI:15377"/>
        <dbReference type="ChEBI" id="CHEBI:15378"/>
        <dbReference type="ChEBI" id="CHEBI:30616"/>
        <dbReference type="ChEBI" id="CHEBI:43474"/>
        <dbReference type="ChEBI" id="CHEBI:456216"/>
    </reaction>
</comment>
<comment type="subunit">
    <text evidence="3 4">Polymerization of globular actin (G-actin) leads to a structural filament (F-actin) in the form of a two-stranded helix (By similarity). Each actin can bind to 4 others (By similarity).</text>
</comment>
<comment type="subcellular location">
    <subcellularLocation>
        <location evidence="4">Cytoplasm</location>
        <location evidence="4">Cytoskeleton</location>
    </subcellularLocation>
    <subcellularLocation>
        <location evidence="1">Nucleus</location>
    </subcellularLocation>
</comment>
<comment type="tissue specificity">
    <text evidence="7">Skeletal muscle, heart, gill, digestive tissue and brain (PubMed:9987040). Widespread expression throughout the brain, with highest levels in regions where neuronal proliferation is greatest (PubMed:9987040).</text>
</comment>
<comment type="PTM">
    <molecule>Actin, cytoplasmic 1</molecule>
    <text evidence="3">N-terminal cleavage of acetylated methionine of immature cytoplasmic actin by ACTMAP.</text>
</comment>
<comment type="PTM">
    <text evidence="4">Oxidation of Met-44 and Met-47 by MICALs (mical1, mical2 or mical3) to form methionine sulfoxide promotes actin filament depolymerization. Mical1 and mical2 produce the (R)-S-oxide form. The (R)-S-oxide form is reverted by msrb1 and msrb2, which promote actin repolymerization (By similarity).</text>
</comment>
<comment type="PTM">
    <text evidence="2">Methylation at His-73 by SETD3. Methylation stabilizes actin filaments.</text>
</comment>
<comment type="miscellaneous">
    <text evidence="1">In vertebrates 3 main groups of actin isoforms, alpha, beta and gamma have been identified. The alpha actins are found in muscle tissues and are a major constituent of the contractile apparatus. The beta and gamma actins coexist in most cell types as components of the cytoskeleton and as mediators of internal cell motility.</text>
</comment>
<comment type="similarity">
    <text evidence="8">Belongs to the actin family.</text>
</comment>
<accession>Q7ZVI7</accession>
<accession>O73815</accession>
<accession>P12714</accession>
<accession>Q6P3K9</accession>
<feature type="chain" id="PRO_0000367087" description="Actin, cytoplasmic 1">
    <location>
        <begin position="1"/>
        <end position="375"/>
    </location>
</feature>
<feature type="initiator methionine" description="Removed; alternate" evidence="2">
    <location>
        <position position="1"/>
    </location>
</feature>
<feature type="chain" id="PRO_0000000795" description="Actin, cytoplasmic 1, N-terminally processed">
    <location>
        <begin position="2"/>
        <end position="375"/>
    </location>
</feature>
<feature type="modified residue" description="N-acetylmethionine; in Actin, cytoplasmic 1; alternate" evidence="2">
    <location>
        <position position="1"/>
    </location>
</feature>
<feature type="modified residue" description="N-acetylaspartate; in Actin, cytoplasmic 1, N-terminally processed" evidence="2">
    <location>
        <position position="2"/>
    </location>
</feature>
<feature type="modified residue" description="Methionine (R)-sulfoxide" evidence="4">
    <location>
        <position position="44"/>
    </location>
</feature>
<feature type="modified residue" description="Methionine (R)-sulfoxide" evidence="4">
    <location>
        <position position="47"/>
    </location>
</feature>
<feature type="modified residue" description="Tele-methylhistidine" evidence="6">
    <location>
        <position position="73"/>
    </location>
</feature>
<feature type="sequence conflict" description="In Ref. 2; AAH45846." evidence="8" ref="2">
    <original>T</original>
    <variation>S</variation>
    <location>
        <position position="66"/>
    </location>
</feature>
<feature type="sequence conflict" description="In Ref. 1; AAC13314." evidence="8" ref="1">
    <original>L</original>
    <variation>V</variation>
    <location>
        <position position="104"/>
    </location>
</feature>
<gene>
    <name type="primary">actba</name>
    <name type="synonym">bact</name>
    <name type="synonym">bactin1</name>
    <name type="synonym">bactzf</name>
</gene>
<reference key="1">
    <citation type="journal article" date="1999" name="Eur. J. Neurosci.">
        <title>Differential brain expression of a new beta-actin gene from zebrafish (Danio rerio).</title>
        <authorList>
            <person name="Barrallo A."/>
            <person name="Gonzalez-Sarmiento R."/>
            <person name="Garcia-Isidoro M."/>
            <person name="Cidad P."/>
            <person name="Porteros A."/>
            <person name="Rodriguez R.E."/>
        </authorList>
    </citation>
    <scope>NUCLEOTIDE SEQUENCE [MRNA]</scope>
    <scope>TISSUE SPECIFICITY</scope>
    <source>
        <tissue>Embryo</tissue>
    </source>
</reference>
<reference key="2">
    <citation type="submission" date="2003-12" db="EMBL/GenBank/DDBJ databases">
        <authorList>
            <consortium name="NIH - Zebrafish Gene Collection (ZGC) project"/>
        </authorList>
    </citation>
    <scope>NUCLEOTIDE SEQUENCE [LARGE SCALE MRNA]</scope>
    <source>
        <strain>AB</strain>
    </source>
</reference>
<reference key="3">
    <citation type="journal article" date="2019" name="Nature">
        <title>SETD3 is an actin histidine methyltransferase that prevents primary dystocia.</title>
        <authorList>
            <person name="Wilkinson A.W."/>
            <person name="Diep J."/>
            <person name="Dai S."/>
            <person name="Liu S."/>
            <person name="Ooi Y.S."/>
            <person name="Song D."/>
            <person name="Li T.M."/>
            <person name="Horton J.R."/>
            <person name="Zhang X."/>
            <person name="Liu C."/>
            <person name="Trivedi D.V."/>
            <person name="Ruppel K.M."/>
            <person name="Vilches-Moure J.G."/>
            <person name="Casey K.M."/>
            <person name="Mak J."/>
            <person name="Cowan T."/>
            <person name="Elias J.E."/>
            <person name="Nagamine C.M."/>
            <person name="Spudich J.A."/>
            <person name="Cheng X."/>
            <person name="Carette J.E."/>
            <person name="Gozani O."/>
        </authorList>
    </citation>
    <scope>METHYLATION AT HIS-73</scope>
</reference>
<name>ACTB1_DANRE</name>
<evidence type="ECO:0000250" key="1">
    <source>
        <dbReference type="UniProtKB" id="O93400"/>
    </source>
</evidence>
<evidence type="ECO:0000250" key="2">
    <source>
        <dbReference type="UniProtKB" id="P60706"/>
    </source>
</evidence>
<evidence type="ECO:0000250" key="3">
    <source>
        <dbReference type="UniProtKB" id="P60709"/>
    </source>
</evidence>
<evidence type="ECO:0000250" key="4">
    <source>
        <dbReference type="UniProtKB" id="P60710"/>
    </source>
</evidence>
<evidence type="ECO:0000250" key="5">
    <source>
        <dbReference type="UniProtKB" id="P68137"/>
    </source>
</evidence>
<evidence type="ECO:0000269" key="6">
    <source>
    </source>
</evidence>
<evidence type="ECO:0000269" key="7">
    <source>
    </source>
</evidence>
<evidence type="ECO:0000305" key="8"/>
<organism>
    <name type="scientific">Danio rerio</name>
    <name type="common">Zebrafish</name>
    <name type="synonym">Brachydanio rerio</name>
    <dbReference type="NCBI Taxonomy" id="7955"/>
    <lineage>
        <taxon>Eukaryota</taxon>
        <taxon>Metazoa</taxon>
        <taxon>Chordata</taxon>
        <taxon>Craniata</taxon>
        <taxon>Vertebrata</taxon>
        <taxon>Euteleostomi</taxon>
        <taxon>Actinopterygii</taxon>
        <taxon>Neopterygii</taxon>
        <taxon>Teleostei</taxon>
        <taxon>Ostariophysi</taxon>
        <taxon>Cypriniformes</taxon>
        <taxon>Danionidae</taxon>
        <taxon>Danioninae</taxon>
        <taxon>Danio</taxon>
    </lineage>
</organism>